<proteinExistence type="inferred from homology"/>
<organism>
    <name type="scientific">Rickettsia felis (strain ATCC VR-1525 / URRWXCal2)</name>
    <name type="common">Rickettsia azadi</name>
    <dbReference type="NCBI Taxonomy" id="315456"/>
    <lineage>
        <taxon>Bacteria</taxon>
        <taxon>Pseudomonadati</taxon>
        <taxon>Pseudomonadota</taxon>
        <taxon>Alphaproteobacteria</taxon>
        <taxon>Rickettsiales</taxon>
        <taxon>Rickettsiaceae</taxon>
        <taxon>Rickettsieae</taxon>
        <taxon>Rickettsia</taxon>
        <taxon>spotted fever group</taxon>
    </lineage>
</organism>
<evidence type="ECO:0000255" key="1">
    <source>
        <dbReference type="HAMAP-Rule" id="MF_01394"/>
    </source>
</evidence>
<gene>
    <name evidence="1" type="primary">nuoA</name>
    <name type="ordered locus">RF_0567</name>
</gene>
<accession>Q4UM05</accession>
<keyword id="KW-0997">Cell inner membrane</keyword>
<keyword id="KW-1003">Cell membrane</keyword>
<keyword id="KW-0472">Membrane</keyword>
<keyword id="KW-0520">NAD</keyword>
<keyword id="KW-0874">Quinone</keyword>
<keyword id="KW-1278">Translocase</keyword>
<keyword id="KW-0812">Transmembrane</keyword>
<keyword id="KW-1133">Transmembrane helix</keyword>
<keyword id="KW-0813">Transport</keyword>
<keyword id="KW-0830">Ubiquinone</keyword>
<name>NUOA_RICFE</name>
<reference key="1">
    <citation type="journal article" date="2005" name="PLoS Biol.">
        <title>The genome sequence of Rickettsia felis identifies the first putative conjugative plasmid in an obligate intracellular parasite.</title>
        <authorList>
            <person name="Ogata H."/>
            <person name="Renesto P."/>
            <person name="Audic S."/>
            <person name="Robert C."/>
            <person name="Blanc G."/>
            <person name="Fournier P.-E."/>
            <person name="Parinello H."/>
            <person name="Claverie J.-M."/>
            <person name="Raoult D."/>
        </authorList>
    </citation>
    <scope>NUCLEOTIDE SEQUENCE [LARGE SCALE GENOMIC DNA]</scope>
    <source>
        <strain>ATCC VR-1525 / URRWXCal2</strain>
    </source>
</reference>
<comment type="function">
    <text evidence="1">NDH-1 shuttles electrons from NADH, via FMN and iron-sulfur (Fe-S) centers, to quinones in the respiratory chain. The immediate electron acceptor for the enzyme in this species is believed to be ubiquinone. Couples the redox reaction to proton translocation (for every two electrons transferred, four hydrogen ions are translocated across the cytoplasmic membrane), and thus conserves the redox energy in a proton gradient.</text>
</comment>
<comment type="catalytic activity">
    <reaction evidence="1">
        <text>a quinone + NADH + 5 H(+)(in) = a quinol + NAD(+) + 4 H(+)(out)</text>
        <dbReference type="Rhea" id="RHEA:57888"/>
        <dbReference type="ChEBI" id="CHEBI:15378"/>
        <dbReference type="ChEBI" id="CHEBI:24646"/>
        <dbReference type="ChEBI" id="CHEBI:57540"/>
        <dbReference type="ChEBI" id="CHEBI:57945"/>
        <dbReference type="ChEBI" id="CHEBI:132124"/>
    </reaction>
</comment>
<comment type="subunit">
    <text evidence="1">NDH-1 is composed of 14 different subunits. Subunits NuoA, H, J, K, L, M, N constitute the membrane sector of the complex.</text>
</comment>
<comment type="subcellular location">
    <subcellularLocation>
        <location evidence="1">Cell inner membrane</location>
        <topology evidence="1">Multi-pass membrane protein</topology>
    </subcellularLocation>
</comment>
<comment type="similarity">
    <text evidence="1">Belongs to the complex I subunit 3 family.</text>
</comment>
<dbReference type="EC" id="7.1.1.-" evidence="1"/>
<dbReference type="EMBL" id="CP000053">
    <property type="protein sequence ID" value="AAY61418.1"/>
    <property type="molecule type" value="Genomic_DNA"/>
</dbReference>
<dbReference type="SMR" id="Q4UM05"/>
<dbReference type="STRING" id="315456.RF_0567"/>
<dbReference type="KEGG" id="rfe:RF_0567"/>
<dbReference type="eggNOG" id="COG0838">
    <property type="taxonomic scope" value="Bacteria"/>
</dbReference>
<dbReference type="HOGENOM" id="CLU_119549_3_1_5"/>
<dbReference type="OrthoDB" id="9791970at2"/>
<dbReference type="Proteomes" id="UP000008548">
    <property type="component" value="Chromosome"/>
</dbReference>
<dbReference type="GO" id="GO:0030964">
    <property type="term" value="C:NADH dehydrogenase complex"/>
    <property type="evidence" value="ECO:0007669"/>
    <property type="project" value="TreeGrafter"/>
</dbReference>
<dbReference type="GO" id="GO:0005886">
    <property type="term" value="C:plasma membrane"/>
    <property type="evidence" value="ECO:0007669"/>
    <property type="project" value="UniProtKB-SubCell"/>
</dbReference>
<dbReference type="GO" id="GO:0008137">
    <property type="term" value="F:NADH dehydrogenase (ubiquinone) activity"/>
    <property type="evidence" value="ECO:0007669"/>
    <property type="project" value="InterPro"/>
</dbReference>
<dbReference type="GO" id="GO:0050136">
    <property type="term" value="F:NADH:ubiquinone reductase (non-electrogenic) activity"/>
    <property type="evidence" value="ECO:0007669"/>
    <property type="project" value="UniProtKB-UniRule"/>
</dbReference>
<dbReference type="GO" id="GO:0048038">
    <property type="term" value="F:quinone binding"/>
    <property type="evidence" value="ECO:0007669"/>
    <property type="project" value="UniProtKB-KW"/>
</dbReference>
<dbReference type="FunFam" id="1.20.58.1610:FF:000004">
    <property type="entry name" value="NADH-quinone oxidoreductase subunit A"/>
    <property type="match status" value="1"/>
</dbReference>
<dbReference type="Gene3D" id="1.20.58.1610">
    <property type="entry name" value="NADH:ubiquinone/plastoquinone oxidoreductase, chain 3"/>
    <property type="match status" value="1"/>
</dbReference>
<dbReference type="HAMAP" id="MF_01394">
    <property type="entry name" value="NDH1_NuoA"/>
    <property type="match status" value="1"/>
</dbReference>
<dbReference type="InterPro" id="IPR023043">
    <property type="entry name" value="NAD(P)H_OxRDtase_bac/plastid"/>
</dbReference>
<dbReference type="InterPro" id="IPR000440">
    <property type="entry name" value="NADH_UbQ/plastoQ_OxRdtase_su3"/>
</dbReference>
<dbReference type="InterPro" id="IPR038430">
    <property type="entry name" value="NDAH_ubi_oxred_su3_sf"/>
</dbReference>
<dbReference type="PANTHER" id="PTHR11058">
    <property type="entry name" value="NADH-UBIQUINONE OXIDOREDUCTASE CHAIN 3"/>
    <property type="match status" value="1"/>
</dbReference>
<dbReference type="PANTHER" id="PTHR11058:SF9">
    <property type="entry name" value="NADH-UBIQUINONE OXIDOREDUCTASE CHAIN 3"/>
    <property type="match status" value="1"/>
</dbReference>
<dbReference type="Pfam" id="PF00507">
    <property type="entry name" value="Oxidored_q4"/>
    <property type="match status" value="1"/>
</dbReference>
<sequence>MLQNSELLQEYLPIAIFFGIALLVSGLIMILPNLLSTKKYNKDKLEPYECGFEPFSDARSKFDIRFYLVAILFIIFDLEIAFLVPWAISLNMIGKIGFFSMIFFLFVLTIGFIYEWKKGALDW</sequence>
<protein>
    <recommendedName>
        <fullName evidence="1">NADH-quinone oxidoreductase subunit A</fullName>
        <ecNumber evidence="1">7.1.1.-</ecNumber>
    </recommendedName>
    <alternativeName>
        <fullName evidence="1">NADH dehydrogenase I subunit A</fullName>
    </alternativeName>
    <alternativeName>
        <fullName evidence="1">NDH-1 subunit A</fullName>
    </alternativeName>
    <alternativeName>
        <fullName evidence="1">NUO1</fullName>
    </alternativeName>
</protein>
<feature type="chain" id="PRO_0000271221" description="NADH-quinone oxidoreductase subunit A">
    <location>
        <begin position="1"/>
        <end position="123"/>
    </location>
</feature>
<feature type="transmembrane region" description="Helical" evidence="1">
    <location>
        <begin position="11"/>
        <end position="31"/>
    </location>
</feature>
<feature type="transmembrane region" description="Helical" evidence="1">
    <location>
        <begin position="68"/>
        <end position="88"/>
    </location>
</feature>
<feature type="transmembrane region" description="Helical" evidence="1">
    <location>
        <begin position="93"/>
        <end position="113"/>
    </location>
</feature>